<feature type="chain" id="PRO_1000126554" description="Large ribosomal subunit protein bL31">
    <location>
        <begin position="1"/>
        <end position="71"/>
    </location>
</feature>
<feature type="binding site" evidence="1">
    <location>
        <position position="16"/>
    </location>
    <ligand>
        <name>Zn(2+)</name>
        <dbReference type="ChEBI" id="CHEBI:29105"/>
    </ligand>
</feature>
<feature type="binding site" evidence="1">
    <location>
        <position position="18"/>
    </location>
    <ligand>
        <name>Zn(2+)</name>
        <dbReference type="ChEBI" id="CHEBI:29105"/>
    </ligand>
</feature>
<feature type="binding site" evidence="1">
    <location>
        <position position="37"/>
    </location>
    <ligand>
        <name>Zn(2+)</name>
        <dbReference type="ChEBI" id="CHEBI:29105"/>
    </ligand>
</feature>
<feature type="binding site" evidence="1">
    <location>
        <position position="40"/>
    </location>
    <ligand>
        <name>Zn(2+)</name>
        <dbReference type="ChEBI" id="CHEBI:29105"/>
    </ligand>
</feature>
<gene>
    <name evidence="1" type="primary">rpmE</name>
    <name type="ordered locus">Asuc_0525</name>
</gene>
<accession>A6VLQ3</accession>
<comment type="function">
    <text evidence="1">Binds the 23S rRNA.</text>
</comment>
<comment type="cofactor">
    <cofactor evidence="1">
        <name>Zn(2+)</name>
        <dbReference type="ChEBI" id="CHEBI:29105"/>
    </cofactor>
    <text evidence="1">Binds 1 zinc ion per subunit.</text>
</comment>
<comment type="subunit">
    <text evidence="1">Part of the 50S ribosomal subunit.</text>
</comment>
<comment type="similarity">
    <text evidence="1">Belongs to the bacterial ribosomal protein bL31 family. Type A subfamily.</text>
</comment>
<evidence type="ECO:0000255" key="1">
    <source>
        <dbReference type="HAMAP-Rule" id="MF_00501"/>
    </source>
</evidence>
<evidence type="ECO:0000305" key="2"/>
<keyword id="KW-0479">Metal-binding</keyword>
<keyword id="KW-1185">Reference proteome</keyword>
<keyword id="KW-0687">Ribonucleoprotein</keyword>
<keyword id="KW-0689">Ribosomal protein</keyword>
<keyword id="KW-0694">RNA-binding</keyword>
<keyword id="KW-0699">rRNA-binding</keyword>
<keyword id="KW-0862">Zinc</keyword>
<proteinExistence type="inferred from homology"/>
<dbReference type="EMBL" id="CP000746">
    <property type="protein sequence ID" value="ABR73900.1"/>
    <property type="molecule type" value="Genomic_DNA"/>
</dbReference>
<dbReference type="RefSeq" id="WP_012072280.1">
    <property type="nucleotide sequence ID" value="NC_009655.1"/>
</dbReference>
<dbReference type="SMR" id="A6VLQ3"/>
<dbReference type="STRING" id="339671.Asuc_0525"/>
<dbReference type="KEGG" id="asu:Asuc_0525"/>
<dbReference type="eggNOG" id="COG0254">
    <property type="taxonomic scope" value="Bacteria"/>
</dbReference>
<dbReference type="HOGENOM" id="CLU_114306_4_3_6"/>
<dbReference type="OrthoDB" id="9803251at2"/>
<dbReference type="Proteomes" id="UP000001114">
    <property type="component" value="Chromosome"/>
</dbReference>
<dbReference type="GO" id="GO:1990904">
    <property type="term" value="C:ribonucleoprotein complex"/>
    <property type="evidence" value="ECO:0007669"/>
    <property type="project" value="UniProtKB-KW"/>
</dbReference>
<dbReference type="GO" id="GO:0005840">
    <property type="term" value="C:ribosome"/>
    <property type="evidence" value="ECO:0007669"/>
    <property type="project" value="UniProtKB-KW"/>
</dbReference>
<dbReference type="GO" id="GO:0046872">
    <property type="term" value="F:metal ion binding"/>
    <property type="evidence" value="ECO:0007669"/>
    <property type="project" value="UniProtKB-KW"/>
</dbReference>
<dbReference type="GO" id="GO:0019843">
    <property type="term" value="F:rRNA binding"/>
    <property type="evidence" value="ECO:0007669"/>
    <property type="project" value="UniProtKB-KW"/>
</dbReference>
<dbReference type="GO" id="GO:0003735">
    <property type="term" value="F:structural constituent of ribosome"/>
    <property type="evidence" value="ECO:0007669"/>
    <property type="project" value="InterPro"/>
</dbReference>
<dbReference type="GO" id="GO:0006412">
    <property type="term" value="P:translation"/>
    <property type="evidence" value="ECO:0007669"/>
    <property type="project" value="UniProtKB-UniRule"/>
</dbReference>
<dbReference type="FunFam" id="4.10.830.30:FF:000001">
    <property type="entry name" value="50S ribosomal protein L31"/>
    <property type="match status" value="1"/>
</dbReference>
<dbReference type="Gene3D" id="4.10.830.30">
    <property type="entry name" value="Ribosomal protein L31"/>
    <property type="match status" value="1"/>
</dbReference>
<dbReference type="HAMAP" id="MF_00501">
    <property type="entry name" value="Ribosomal_bL31_1"/>
    <property type="match status" value="1"/>
</dbReference>
<dbReference type="InterPro" id="IPR034704">
    <property type="entry name" value="Ribosomal_bL28/bL31-like_sf"/>
</dbReference>
<dbReference type="InterPro" id="IPR002150">
    <property type="entry name" value="Ribosomal_bL31"/>
</dbReference>
<dbReference type="InterPro" id="IPR027491">
    <property type="entry name" value="Ribosomal_bL31_A"/>
</dbReference>
<dbReference type="InterPro" id="IPR042105">
    <property type="entry name" value="Ribosomal_bL31_sf"/>
</dbReference>
<dbReference type="NCBIfam" id="TIGR00105">
    <property type="entry name" value="L31"/>
    <property type="match status" value="1"/>
</dbReference>
<dbReference type="NCBIfam" id="NF000612">
    <property type="entry name" value="PRK00019.1"/>
    <property type="match status" value="1"/>
</dbReference>
<dbReference type="NCBIfam" id="NF001809">
    <property type="entry name" value="PRK00528.1"/>
    <property type="match status" value="1"/>
</dbReference>
<dbReference type="PANTHER" id="PTHR33280">
    <property type="entry name" value="50S RIBOSOMAL PROTEIN L31, CHLOROPLASTIC"/>
    <property type="match status" value="1"/>
</dbReference>
<dbReference type="PANTHER" id="PTHR33280:SF6">
    <property type="entry name" value="LARGE RIBOSOMAL SUBUNIT PROTEIN BL31A"/>
    <property type="match status" value="1"/>
</dbReference>
<dbReference type="Pfam" id="PF01197">
    <property type="entry name" value="Ribosomal_L31"/>
    <property type="match status" value="1"/>
</dbReference>
<dbReference type="PRINTS" id="PR01249">
    <property type="entry name" value="RIBOSOMALL31"/>
</dbReference>
<dbReference type="SUPFAM" id="SSF143800">
    <property type="entry name" value="L28p-like"/>
    <property type="match status" value="1"/>
</dbReference>
<dbReference type="PROSITE" id="PS01143">
    <property type="entry name" value="RIBOSOMAL_L31"/>
    <property type="match status" value="1"/>
</dbReference>
<protein>
    <recommendedName>
        <fullName evidence="1">Large ribosomal subunit protein bL31</fullName>
    </recommendedName>
    <alternativeName>
        <fullName evidence="2">50S ribosomal protein L31</fullName>
    </alternativeName>
</protein>
<organism>
    <name type="scientific">Actinobacillus succinogenes (strain ATCC 55618 / DSM 22257 / CCUG 43843 / 130Z)</name>
    <dbReference type="NCBI Taxonomy" id="339671"/>
    <lineage>
        <taxon>Bacteria</taxon>
        <taxon>Pseudomonadati</taxon>
        <taxon>Pseudomonadota</taxon>
        <taxon>Gammaproteobacteria</taxon>
        <taxon>Pasteurellales</taxon>
        <taxon>Pasteurellaceae</taxon>
        <taxon>Actinobacillus</taxon>
    </lineage>
</organism>
<sequence length="71" mass="7931">MKQGIHPEYKEITATCSCGNVIKTRSTLGKDINLDVCGNCHPFYTGKQRVVDTGGRVERFNKRFSIPGTKK</sequence>
<name>RL31_ACTSZ</name>
<reference key="1">
    <citation type="journal article" date="2010" name="BMC Genomics">
        <title>A genomic perspective on the potential of Actinobacillus succinogenes for industrial succinate production.</title>
        <authorList>
            <person name="McKinlay J.B."/>
            <person name="Laivenieks M."/>
            <person name="Schindler B.D."/>
            <person name="McKinlay A.A."/>
            <person name="Siddaramappa S."/>
            <person name="Challacombe J.F."/>
            <person name="Lowry S.R."/>
            <person name="Clum A."/>
            <person name="Lapidus A.L."/>
            <person name="Burkhart K.B."/>
            <person name="Harkins V."/>
            <person name="Vieille C."/>
        </authorList>
    </citation>
    <scope>NUCLEOTIDE SEQUENCE [LARGE SCALE GENOMIC DNA]</scope>
    <source>
        <strain>ATCC 55618 / DSM 22257 / CCUG 43843 / 130Z</strain>
    </source>
</reference>